<dbReference type="EMBL" id="AE016879">
    <property type="protein sequence ID" value="AAP28495.1"/>
    <property type="molecule type" value="Genomic_DNA"/>
</dbReference>
<dbReference type="EMBL" id="AE017334">
    <property type="protein sequence ID" value="AAT33926.1"/>
    <property type="molecule type" value="Genomic_DNA"/>
</dbReference>
<dbReference type="EMBL" id="AE017225">
    <property type="protein sequence ID" value="AAT56756.1"/>
    <property type="molecule type" value="Genomic_DNA"/>
</dbReference>
<dbReference type="RefSeq" id="NP_847009.1">
    <property type="nucleotide sequence ID" value="NC_003997.3"/>
</dbReference>
<dbReference type="RefSeq" id="WP_000009513.1">
    <property type="nucleotide sequence ID" value="NZ_WXXJ01000026.1"/>
</dbReference>
<dbReference type="RefSeq" id="WP_000009514.1">
    <property type="nucleotide sequence ID" value="NZ_NRIV01000007.1"/>
</dbReference>
<dbReference type="SMR" id="Q81L28"/>
<dbReference type="STRING" id="261594.GBAA_4806"/>
<dbReference type="DNASU" id="1083937"/>
<dbReference type="GeneID" id="93006545"/>
<dbReference type="KEGG" id="ban:BA_4806"/>
<dbReference type="KEGG" id="bar:GBAA_4806"/>
<dbReference type="KEGG" id="bat:BAS4458"/>
<dbReference type="PATRIC" id="fig|198094.11.peg.4767"/>
<dbReference type="eggNOG" id="ENOG5032YQ7">
    <property type="taxonomic scope" value="Bacteria"/>
</dbReference>
<dbReference type="HOGENOM" id="CLU_188877_0_0_9"/>
<dbReference type="OMA" id="IFEAAWE"/>
<dbReference type="OrthoDB" id="2453696at2"/>
<dbReference type="Proteomes" id="UP000000427">
    <property type="component" value="Chromosome"/>
</dbReference>
<dbReference type="Proteomes" id="UP000000594">
    <property type="component" value="Chromosome"/>
</dbReference>
<dbReference type="GO" id="GO:0030436">
    <property type="term" value="P:asexual sporulation"/>
    <property type="evidence" value="ECO:0007669"/>
    <property type="project" value="UniProtKB-UniRule"/>
</dbReference>
<dbReference type="GO" id="GO:0030435">
    <property type="term" value="P:sporulation resulting in formation of a cellular spore"/>
    <property type="evidence" value="ECO:0007669"/>
    <property type="project" value="UniProtKB-KW"/>
</dbReference>
<dbReference type="HAMAP" id="MF_00669">
    <property type="entry name" value="SspI"/>
    <property type="match status" value="1"/>
</dbReference>
<dbReference type="InterPro" id="IPR017525">
    <property type="entry name" value="SspI"/>
</dbReference>
<dbReference type="NCBIfam" id="TIGR03092">
    <property type="entry name" value="SASP_sspI"/>
    <property type="match status" value="1"/>
</dbReference>
<dbReference type="Pfam" id="PF14098">
    <property type="entry name" value="SSPI"/>
    <property type="match status" value="1"/>
</dbReference>
<reference key="1">
    <citation type="journal article" date="2003" name="Nature">
        <title>The genome sequence of Bacillus anthracis Ames and comparison to closely related bacteria.</title>
        <authorList>
            <person name="Read T.D."/>
            <person name="Peterson S.N."/>
            <person name="Tourasse N.J."/>
            <person name="Baillie L.W."/>
            <person name="Paulsen I.T."/>
            <person name="Nelson K.E."/>
            <person name="Tettelin H."/>
            <person name="Fouts D.E."/>
            <person name="Eisen J.A."/>
            <person name="Gill S.R."/>
            <person name="Holtzapple E.K."/>
            <person name="Okstad O.A."/>
            <person name="Helgason E."/>
            <person name="Rilstone J."/>
            <person name="Wu M."/>
            <person name="Kolonay J.F."/>
            <person name="Beanan M.J."/>
            <person name="Dodson R.J."/>
            <person name="Brinkac L.M."/>
            <person name="Gwinn M.L."/>
            <person name="DeBoy R.T."/>
            <person name="Madpu R."/>
            <person name="Daugherty S.C."/>
            <person name="Durkin A.S."/>
            <person name="Haft D.H."/>
            <person name="Nelson W.C."/>
            <person name="Peterson J.D."/>
            <person name="Pop M."/>
            <person name="Khouri H.M."/>
            <person name="Radune D."/>
            <person name="Benton J.L."/>
            <person name="Mahamoud Y."/>
            <person name="Jiang L."/>
            <person name="Hance I.R."/>
            <person name="Weidman J.F."/>
            <person name="Berry K.J."/>
            <person name="Plaut R.D."/>
            <person name="Wolf A.M."/>
            <person name="Watkins K.L."/>
            <person name="Nierman W.C."/>
            <person name="Hazen A."/>
            <person name="Cline R.T."/>
            <person name="Redmond C."/>
            <person name="Thwaite J.E."/>
            <person name="White O."/>
            <person name="Salzberg S.L."/>
            <person name="Thomason B."/>
            <person name="Friedlander A.M."/>
            <person name="Koehler T.M."/>
            <person name="Hanna P.C."/>
            <person name="Kolstoe A.-B."/>
            <person name="Fraser C.M."/>
        </authorList>
    </citation>
    <scope>NUCLEOTIDE SEQUENCE [LARGE SCALE GENOMIC DNA]</scope>
    <source>
        <strain>Ames / isolate Porton</strain>
    </source>
</reference>
<reference key="2">
    <citation type="journal article" date="2009" name="J. Bacteriol.">
        <title>The complete genome sequence of Bacillus anthracis Ames 'Ancestor'.</title>
        <authorList>
            <person name="Ravel J."/>
            <person name="Jiang L."/>
            <person name="Stanley S.T."/>
            <person name="Wilson M.R."/>
            <person name="Decker R.S."/>
            <person name="Read T.D."/>
            <person name="Worsham P."/>
            <person name="Keim P.S."/>
            <person name="Salzberg S.L."/>
            <person name="Fraser-Liggett C.M."/>
            <person name="Rasko D.A."/>
        </authorList>
    </citation>
    <scope>NUCLEOTIDE SEQUENCE [LARGE SCALE GENOMIC DNA]</scope>
    <source>
        <strain>Ames ancestor</strain>
    </source>
</reference>
<reference key="3">
    <citation type="submission" date="2004-01" db="EMBL/GenBank/DDBJ databases">
        <title>Complete genome sequence of Bacillus anthracis Sterne.</title>
        <authorList>
            <person name="Brettin T.S."/>
            <person name="Bruce D."/>
            <person name="Challacombe J.F."/>
            <person name="Gilna P."/>
            <person name="Han C."/>
            <person name="Hill K."/>
            <person name="Hitchcock P."/>
            <person name="Jackson P."/>
            <person name="Keim P."/>
            <person name="Longmire J."/>
            <person name="Lucas S."/>
            <person name="Okinaka R."/>
            <person name="Richardson P."/>
            <person name="Rubin E."/>
            <person name="Tice H."/>
        </authorList>
    </citation>
    <scope>NUCLEOTIDE SEQUENCE [LARGE SCALE GENOMIC DNA]</scope>
    <source>
        <strain>Sterne</strain>
    </source>
</reference>
<protein>
    <recommendedName>
        <fullName evidence="1">Small, acid-soluble spore protein I</fullName>
        <shortName evidence="1">SASP I</shortName>
    </recommendedName>
</protein>
<feature type="chain" id="PRO_0000218327" description="Small, acid-soluble spore protein I">
    <location>
        <begin position="1"/>
        <end position="69"/>
    </location>
</feature>
<feature type="sequence conflict" description="In Ref. 3; AAT56756." evidence="2" ref="3">
    <original>D</original>
    <variation>G</variation>
    <location>
        <position position="52"/>
    </location>
</feature>
<name>SSPI_BACAN</name>
<evidence type="ECO:0000255" key="1">
    <source>
        <dbReference type="HAMAP-Rule" id="MF_00669"/>
    </source>
</evidence>
<evidence type="ECO:0000305" key="2"/>
<proteinExistence type="inferred from homology"/>
<gene>
    <name evidence="1" type="primary">sspI</name>
    <name type="ordered locus">BA_4806</name>
    <name type="ordered locus">GBAA_4806</name>
    <name type="ordered locus">BAS4458</name>
</gene>
<organism>
    <name type="scientific">Bacillus anthracis</name>
    <dbReference type="NCBI Taxonomy" id="1392"/>
    <lineage>
        <taxon>Bacteria</taxon>
        <taxon>Bacillati</taxon>
        <taxon>Bacillota</taxon>
        <taxon>Bacilli</taxon>
        <taxon>Bacillales</taxon>
        <taxon>Bacillaceae</taxon>
        <taxon>Bacillus</taxon>
        <taxon>Bacillus cereus group</taxon>
    </lineage>
</organism>
<keyword id="KW-1185">Reference proteome</keyword>
<keyword id="KW-0749">Sporulation</keyword>
<comment type="subcellular location">
    <subcellularLocation>
        <location evidence="1">Spore core</location>
    </subcellularLocation>
</comment>
<comment type="induction">
    <text evidence="1">Expressed only in the forespore compartment of sporulating cells.</text>
</comment>
<comment type="similarity">
    <text evidence="1">Belongs to the SspI family.</text>
</comment>
<accession>Q81L28</accession>
<accession>Q6HSI3</accession>
<accession>Q6KLS8</accession>
<sequence length="69" mass="7687">MSFNLRGAVLANVSGNTQDQLQETIVDAIQSGEEKMLPGLGVLFEVIWKNADENEKHEMLETLEQGLKK</sequence>